<proteinExistence type="evidence at protein level"/>
<protein>
    <recommendedName>
        <fullName evidence="1">Protein Tat</fullName>
    </recommendedName>
    <alternativeName>
        <fullName evidence="1">Transactivating regulatory protein</fullName>
    </alternativeName>
</protein>
<organismHost>
    <name type="scientific">Homo sapiens</name>
    <name type="common">Human</name>
    <dbReference type="NCBI Taxonomy" id="9606"/>
</organismHost>
<name>TAT_HV1MA</name>
<reference key="1">
    <citation type="journal article" date="1986" name="Cell">
        <title>Genetic variability of the AIDS virus: nucleotide sequence analysis of two isolates from African patients.</title>
        <authorList>
            <person name="Alizon M."/>
            <person name="Wain-Hobson S."/>
            <person name="Montagnier L."/>
            <person name="Sonigo P."/>
        </authorList>
    </citation>
    <scope>NUCLEOTIDE SEQUENCE [GENOMIC RNA]</scope>
</reference>
<reference key="2">
    <citation type="journal article" date="2005" name="Microbes Infect.">
        <title>Decoding Tat: the biology of HIV Tat posttranslational modifications.</title>
        <authorList>
            <person name="Hetzer C."/>
            <person name="Dormeyer W."/>
            <person name="Schnolzer M."/>
            <person name="Ott M."/>
        </authorList>
    </citation>
    <scope>REVIEW</scope>
    <scope>ALTERNATIVE SPLICING</scope>
</reference>
<reference key="3">
    <citation type="journal article" date="2006" name="Front. Biosci.">
        <title>The multiple functions of HIV-1 Tat: proliferation versus apoptosis.</title>
        <authorList>
            <person name="Peruzzi F."/>
        </authorList>
    </citation>
    <scope>REVIEW</scope>
</reference>
<reference key="4">
    <citation type="journal article" date="2006" name="Microbes Infect.">
        <title>HIV tat and neurotoxicity.</title>
        <authorList>
            <person name="King J.E."/>
            <person name="Eugenin E.A."/>
            <person name="Buckner C.M."/>
            <person name="Berman J.W."/>
        </authorList>
    </citation>
    <scope>REVIEW</scope>
</reference>
<sequence length="87" mass="10036">MDPVDPNLEPWNHPGSQPRTPCNKCYCKKCCYHCQMCFITKGLGISYGRKKRRQRRRPPQGNQAHQDPLPEQPSSQHRGDHPTGPKE</sequence>
<accession>P04613</accession>
<dbReference type="EMBL" id="X04415">
    <property type="protein sequence ID" value="CAA28015.1"/>
    <property type="molecule type" value="Genomic_RNA"/>
</dbReference>
<dbReference type="PIR" id="T01665">
    <property type="entry name" value="T01665"/>
</dbReference>
<dbReference type="PDB" id="1K5K">
    <property type="method" value="NMR"/>
    <property type="chains" value="A=1-87"/>
</dbReference>
<dbReference type="PDBsum" id="1K5K"/>
<dbReference type="SMR" id="P04613"/>
<dbReference type="EvolutionaryTrace" id="P04613"/>
<dbReference type="Proteomes" id="UP000007696">
    <property type="component" value="Genome"/>
</dbReference>
<dbReference type="GO" id="GO:0005576">
    <property type="term" value="C:extracellular region"/>
    <property type="evidence" value="ECO:0007669"/>
    <property type="project" value="UniProtKB-SubCell"/>
</dbReference>
<dbReference type="GO" id="GO:0030430">
    <property type="term" value="C:host cell cytoplasm"/>
    <property type="evidence" value="ECO:0007669"/>
    <property type="project" value="UniProtKB-SubCell"/>
</dbReference>
<dbReference type="GO" id="GO:0044196">
    <property type="term" value="C:host cell nucleolus"/>
    <property type="evidence" value="ECO:0007669"/>
    <property type="project" value="UniProtKB-SubCell"/>
</dbReference>
<dbReference type="GO" id="GO:0042805">
    <property type="term" value="F:actinin binding"/>
    <property type="evidence" value="ECO:0007669"/>
    <property type="project" value="UniProtKB-UniRule"/>
</dbReference>
<dbReference type="GO" id="GO:0030332">
    <property type="term" value="F:cyclin binding"/>
    <property type="evidence" value="ECO:0007669"/>
    <property type="project" value="UniProtKB-UniRule"/>
</dbReference>
<dbReference type="GO" id="GO:0046872">
    <property type="term" value="F:metal ion binding"/>
    <property type="evidence" value="ECO:0007669"/>
    <property type="project" value="UniProtKB-UniRule"/>
</dbReference>
<dbReference type="GO" id="GO:0019904">
    <property type="term" value="F:protein domain specific binding"/>
    <property type="evidence" value="ECO:0007669"/>
    <property type="project" value="UniProtKB-UniRule"/>
</dbReference>
<dbReference type="GO" id="GO:0004865">
    <property type="term" value="F:protein serine/threonine phosphatase inhibitor activity"/>
    <property type="evidence" value="ECO:0007669"/>
    <property type="project" value="UniProtKB-KW"/>
</dbReference>
<dbReference type="GO" id="GO:0001069">
    <property type="term" value="F:regulatory region RNA binding"/>
    <property type="evidence" value="ECO:0000353"/>
    <property type="project" value="DisProt"/>
</dbReference>
<dbReference type="GO" id="GO:0001070">
    <property type="term" value="F:RNA-binding transcription regulator activity"/>
    <property type="evidence" value="ECO:0007669"/>
    <property type="project" value="UniProtKB-UniRule"/>
</dbReference>
<dbReference type="GO" id="GO:1990970">
    <property type="term" value="F:trans-activation response element binding"/>
    <property type="evidence" value="ECO:0007669"/>
    <property type="project" value="UniProtKB-UniRule"/>
</dbReference>
<dbReference type="GO" id="GO:0006351">
    <property type="term" value="P:DNA-templated transcription"/>
    <property type="evidence" value="ECO:0007669"/>
    <property type="project" value="UniProtKB-UniRule"/>
</dbReference>
<dbReference type="GO" id="GO:0032968">
    <property type="term" value="P:positive regulation of transcription elongation by RNA polymerase II"/>
    <property type="evidence" value="ECO:0007669"/>
    <property type="project" value="UniProtKB-UniRule"/>
</dbReference>
<dbReference type="GO" id="GO:0050434">
    <property type="term" value="P:positive regulation of viral transcription"/>
    <property type="evidence" value="ECO:0007669"/>
    <property type="project" value="UniProtKB-UniRule"/>
</dbReference>
<dbReference type="GO" id="GO:0039525">
    <property type="term" value="P:symbiont-mediated perturbation of host chromatin organization"/>
    <property type="evidence" value="ECO:0007669"/>
    <property type="project" value="UniProtKB-UniRule"/>
</dbReference>
<dbReference type="GO" id="GO:0052170">
    <property type="term" value="P:symbiont-mediated suppression of host innate immune response"/>
    <property type="evidence" value="ECO:0007669"/>
    <property type="project" value="UniProtKB-KW"/>
</dbReference>
<dbReference type="GO" id="GO:0039606">
    <property type="term" value="P:symbiont-mediated suppression of host translation initiation"/>
    <property type="evidence" value="ECO:0007669"/>
    <property type="project" value="UniProtKB-KW"/>
</dbReference>
<dbReference type="GO" id="GO:0039502">
    <property type="term" value="P:symbiont-mediated suppression of host type I interferon-mediated signaling pathway"/>
    <property type="evidence" value="ECO:0007669"/>
    <property type="project" value="UniProtKB-UniRule"/>
</dbReference>
<dbReference type="GO" id="GO:0019080">
    <property type="term" value="P:viral gene expression"/>
    <property type="evidence" value="ECO:0000270"/>
    <property type="project" value="DisProt"/>
</dbReference>
<dbReference type="Gene3D" id="4.10.20.10">
    <property type="entry name" value="Tat domain"/>
    <property type="match status" value="1"/>
</dbReference>
<dbReference type="HAMAP" id="MF_04079">
    <property type="entry name" value="HIV_TAT"/>
    <property type="match status" value="1"/>
</dbReference>
<dbReference type="InterPro" id="IPR001831">
    <property type="entry name" value="IV_Tat"/>
</dbReference>
<dbReference type="InterPro" id="IPR036963">
    <property type="entry name" value="Tat_dom_sf"/>
</dbReference>
<dbReference type="Pfam" id="PF00539">
    <property type="entry name" value="Tat"/>
    <property type="match status" value="1"/>
</dbReference>
<dbReference type="PRINTS" id="PR00055">
    <property type="entry name" value="HIVTATDOMAIN"/>
</dbReference>
<comment type="function">
    <text evidence="1">Transcriptional activator that increases RNA Pol II processivity, thereby increasing the level of full-length viral transcripts. Recognizes a hairpin structure at the 5'-LTR of the nascent viral mRNAs referred to as the transactivation responsive RNA element (TAR) and recruits the cyclin T1-CDK9 complex (P-TEFb complex) that will in turn hyperphosphorylate the RNA polymerase II to allow efficient elongation. The CDK9 component of P-TEFb and other Tat-activated kinases hyperphosphorylate the C-terminus of RNA Pol II that becomes stabilized and much more processive. Other factors such as HTATSF1/Tat-SF1, SUPT5H/SPT5, and HTATIP2 are also important for Tat's function. Besides its effect on RNA Pol II processivity, Tat induces chromatin remodeling of proviral genes by recruiting the histone acetyltransferases (HATs) CREBBP, EP300 and PCAF to the chromatin. This also contributes to the increase in proviral transcription rate, especially when the provirus integrates in transcriptionally silent region of the host genome. To ensure maximal activation of the LTR, Tat mediates nuclear translocation of NF-kappa-B by interacting with host RELA. Through its interaction with host TBP, Tat may also modulate transcription initiation. Tat can reactivate a latently infected cell by penetrating in it and transactivating its LTR promoter. In the cytoplasm, Tat is thought to act as a translational activator of HIV-1 mRNAs.</text>
</comment>
<comment type="function">
    <text evidence="1">Extracellular circulating Tat can be endocytosed by surrounding uninfected cells via the binding to several surface receptors such as CD26, CXCR4, heparan sulfate proteoglycans (HSPG) or LDLR. Neurons are rarely infected, but they internalize Tat via their LDLR. Through its interaction with nuclear HATs, Tat is potentially able to control the acetylation-dependent cellular gene expression. Modulates the expression of many cellular genes involved in cell survival, proliferation or in coding for cytokines or cytokine receptors. Tat plays a role in T-cell and neurons apoptosis. Tat induced neurotoxicity and apoptosis probably contribute to neuroAIDS. Circulating Tat also acts as a chemokine-like and/or growth factor-like molecule that binds to specific receptors on the surface of the cells, affecting many cellular pathways. In the vascular system, Tat binds to ITGAV/ITGB3 and ITGA5/ITGB1 integrins dimers at the surface of endothelial cells and competes with bFGF for heparin-binding sites, leading to an excess of soluble bFGF.</text>
</comment>
<comment type="subunit">
    <text evidence="1">Interacts with host CCNT1. Associates with the P-TEFb complex composed at least of Tat, P-TEFb (CDK9 and CCNT1), TAR RNA, RNA Pol II. Recruits the HATs CREBBP, TAF1/TFIID, EP300, PCAF and GCN5L2. Interacts with host KAT5/Tip60; this interaction targets the latter to degradation. Interacts with the host deacetylase SIRT1. Interacts with host capping enzyme RNGTT; this interaction stimulates RNGTT. Binds to host KDR, and to the host integrins ITGAV/ITGB3 and ITGA5/ITGB1. Interacts with host KPNB1/importin beta-1 without previous binding to KPNA1/importin alpha-1. Interacts with EIF2AK2. Interacts with host nucleosome assembly protein NAP1L1; this interaction may be required for the transport of Tat within the nucleus, since the two proteins interact at the nuclear rim. Interacts with host C1QBP/SF2P32; this interaction involves lysine-acetylated Tat. Interacts with the host chemokine receptors CCR2, CCR3 and CXCR4. Interacts with host DPP4/CD26; this interaction may trigger an anti-proliferative effect. Interacts with host LDLR. Interacts with the host extracellular matrix metalloproteinase MMP1. Interacts with host PRMT6; this interaction mediates Tat's methylation. Interacts with, and is ubiquitinated by MDM2/Hdm2. Interacts with host PSMC3 and HTATIP2. Interacts with STAB1; this interaction may overcome SATB1-mediated repression of IL2 and IL2RA (interleukin) in T cells by binding to the same domain than HDAC1. Interacts (when acetylated) with human CDK13, thereby increasing HIV-1 mRNA splicing and promoting the production of the doubly spliced HIV-1 protein Nef. Interacts with host TBP; this interaction modulates the activity of transcriptional pre-initiation complex. Interacts with host RELA. Interacts with host PLSCR1; this interaction negatively regulates Tat transactivation activity by altering its subcellular distribution.</text>
</comment>
<comment type="subcellular location">
    <subcellularLocation>
        <location evidence="1">Host nucleus</location>
        <location evidence="1">Host nucleolus</location>
    </subcellularLocation>
    <subcellularLocation>
        <location evidence="1">Host cytoplasm</location>
    </subcellularLocation>
    <subcellularLocation>
        <location evidence="1">Secreted</location>
    </subcellularLocation>
    <text evidence="1">Probably localizes to both nuclear and nucleolar compartments. Nuclear localization is mediated through the interaction of the nuclear localization signal with importin KPNB1. Secretion occurs through a Golgi-independent pathway. Tat is released from infected cells to the extracellular space where it remains associated to the cell membrane, or is secreted into the cerebrospinal fluid and sera. Extracellular Tat can be endocytosed by surrounding uninfected cells via binding to several receptors depending on the cell type.</text>
</comment>
<comment type="alternative products">
    <event type="alternative splicing"/>
    <isoform>
        <id>P04613-1</id>
        <name>Long</name>
        <sequence type="displayed"/>
    </isoform>
    <isoform>
        <id>P04613-2</id>
        <name>Short</name>
        <sequence type="described" ref="VSP_022414"/>
    </isoform>
</comment>
<comment type="domain">
    <text evidence="1">The cell attachment site mediates the interaction with ITGAV/ITGB3 and ITGA5/ITGB1 integrins, leading to vascular cell migration and invasion. This interaction also provides endothelial cells with the adhesion signal they require to grow in response to mitogens.</text>
</comment>
<comment type="domain">
    <text evidence="1">The Cys-rich region may bind 2 zinc ions. This region is involved in binding to KAT5.</text>
</comment>
<comment type="domain">
    <text evidence="1">The transactivation domain mediates the interaction with CCNT1, GCN5L2, and MDM2.</text>
</comment>
<comment type="domain">
    <text>The Arg-rich RNA-binding region binds the TAR RNA. This region also mediates the nuclear localization through direct binding to KPNB1 and is involved in Tat's transfer across cell membranes (protein transduction). The same region is required for the interaction with EP300, PCAF, EIF2AK2 and KDR.</text>
</comment>
<comment type="PTM">
    <text evidence="1">Asymmetrical arginine methylation by host PRMT6 seems to diminish the transactivation capacity of Tat and affects the interaction with host CCNT1.</text>
</comment>
<comment type="PTM">
    <text evidence="1">Acetylation by EP300, CREBBP, GCN5L2/GCN5 and PCAF regulates the transactivation activity of Tat. EP300-mediated acetylation of Lys-50 promotes dissociation of Tat from the TAR RNA through the competitive binding to PCAF's bromodomain. In addition, the non-acetylated Tat's N-terminus can also interact with PCAF. PCAF-mediated acetylation of Lys-28 enhances Tat's binding to CCNT1. Lys-50 is deacetylated by SIRT1.</text>
</comment>
<comment type="PTM">
    <text evidence="1">Polyubiquitination by host MDM2 does not target Tat to degradation, but activates its transactivation function and fosters interaction with CCNT1 and TAR RNA.</text>
</comment>
<comment type="PTM">
    <text evidence="1">Phosphorylated by EIF2AK2 on serine and threonine residues adjacent to the basic region important for TAR RNA binding and function. Phosphorylation of Tat by EIF2AK2 is dependent on the prior activation of EIF2AK2 by dsRNA.</text>
</comment>
<comment type="miscellaneous">
    <text evidence="1">This truncated variant has a premature stop codon. It may have arose as a consequence of tissue culture passaging.</text>
</comment>
<comment type="miscellaneous">
    <text evidence="1">HIV-1 lineages are divided in three main groups, M (for Major), O (for Outlier), and N (for New, or Non-M, Non-O). The vast majority of strains found worldwide belong to the group M. Group O seems to be endemic to and largely confined to Cameroon and neighboring countries in West Central Africa, where these viruses represent a small minority of HIV-1 strains. The group N is represented by a limited number of isolates from Cameroonian persons. The group M is further subdivided in 9 clades or subtypes (A to D, F to H, J and K).</text>
</comment>
<comment type="miscellaneous">
    <molecule>Isoform Short</molecule>
    <text evidence="3">Expressed in the late stage of the infection cycle, when unspliced viral RNAs are exported to the cytoplasm by the viral Rev protein.</text>
</comment>
<comment type="similarity">
    <text evidence="1">Belongs to the lentiviruses Tat family.</text>
</comment>
<organism>
    <name type="scientific">Human immunodeficiency virus type 1 group M subtype A (isolate MAL)</name>
    <name type="common">HIV-1</name>
    <dbReference type="NCBI Taxonomy" id="11697"/>
    <lineage>
        <taxon>Viruses</taxon>
        <taxon>Riboviria</taxon>
        <taxon>Pararnavirae</taxon>
        <taxon>Artverviricota</taxon>
        <taxon>Revtraviricetes</taxon>
        <taxon>Ortervirales</taxon>
        <taxon>Retroviridae</taxon>
        <taxon>Orthoretrovirinae</taxon>
        <taxon>Lentivirus</taxon>
        <taxon>Human immunodeficiency virus type 1</taxon>
    </lineage>
</organism>
<keyword id="KW-0002">3D-structure</keyword>
<keyword id="KW-0007">Acetylation</keyword>
<keyword id="KW-0010">Activator</keyword>
<keyword id="KW-0014">AIDS</keyword>
<keyword id="KW-0025">Alternative splicing</keyword>
<keyword id="KW-0053">Apoptosis</keyword>
<keyword id="KW-1035">Host cytoplasm</keyword>
<keyword id="KW-1048">Host nucleus</keyword>
<keyword id="KW-0945">Host-virus interaction</keyword>
<keyword id="KW-1090">Inhibition of host innate immune response by virus</keyword>
<keyword id="KW-1114">Inhibition of host interferon signaling pathway by virus</keyword>
<keyword id="KW-0922">Interferon antiviral system evasion</keyword>
<keyword id="KW-1017">Isopeptide bond</keyword>
<keyword id="KW-0479">Metal-binding</keyword>
<keyword id="KW-0488">Methylation</keyword>
<keyword id="KW-1122">Modulation of host chromatin by virus</keyword>
<keyword id="KW-1126">Modulation of host PP1 activity by virus</keyword>
<keyword id="KW-0597">Phosphoprotein</keyword>
<keyword id="KW-1185">Reference proteome</keyword>
<keyword id="KW-0694">RNA-binding</keyword>
<keyword id="KW-0964">Secreted</keyword>
<keyword id="KW-0804">Transcription</keyword>
<keyword id="KW-0805">Transcription regulation</keyword>
<keyword id="KW-0832">Ubl conjugation</keyword>
<keyword id="KW-0899">Viral immunoevasion</keyword>
<keyword id="KW-0862">Zinc</keyword>
<feature type="chain" id="PRO_0000085357" description="Protein Tat">
    <location>
        <begin position="1"/>
        <end position="87"/>
    </location>
</feature>
<feature type="region of interest" description="Transactivation" evidence="1">
    <location>
        <begin position="1"/>
        <end position="48"/>
    </location>
</feature>
<feature type="region of interest" description="Interaction with human CREBBP" evidence="1">
    <location>
        <begin position="1"/>
        <end position="24"/>
    </location>
</feature>
<feature type="region of interest" description="Disordered" evidence="2">
    <location>
        <begin position="1"/>
        <end position="21"/>
    </location>
</feature>
<feature type="region of interest" description="Cysteine-rich" evidence="1">
    <location>
        <begin position="22"/>
        <end position="37"/>
    </location>
</feature>
<feature type="region of interest" description="Core" evidence="1">
    <location>
        <begin position="38"/>
        <end position="48"/>
    </location>
</feature>
<feature type="region of interest" description="Disordered" evidence="2">
    <location>
        <begin position="45"/>
        <end position="87"/>
    </location>
</feature>
<feature type="region of interest" description="Interaction with the host capping enzyme RNGTT" evidence="1">
    <location>
        <begin position="49"/>
        <end position="87"/>
    </location>
</feature>
<feature type="short sequence motif" description="Nuclear localization signal, RNA-binding (TAR), and protein transduction" evidence="1">
    <location>
        <begin position="49"/>
        <end position="57"/>
    </location>
</feature>
<feature type="short sequence motif" description="Cell attachment site" evidence="1">
    <location>
        <begin position="78"/>
        <end position="80"/>
    </location>
</feature>
<feature type="compositionally biased region" description="Basic residues" evidence="2">
    <location>
        <begin position="48"/>
        <end position="58"/>
    </location>
</feature>
<feature type="compositionally biased region" description="Basic and acidic residues" evidence="2">
    <location>
        <begin position="77"/>
        <end position="87"/>
    </location>
</feature>
<feature type="binding site" evidence="1">
    <location>
        <position position="22"/>
    </location>
    <ligand>
        <name>Zn(2+)</name>
        <dbReference type="ChEBI" id="CHEBI:29105"/>
        <label>1</label>
    </ligand>
</feature>
<feature type="binding site" evidence="1">
    <location>
        <position position="25"/>
    </location>
    <ligand>
        <name>Zn(2+)</name>
        <dbReference type="ChEBI" id="CHEBI:29105"/>
        <label>2</label>
    </ligand>
</feature>
<feature type="binding site" evidence="1">
    <location>
        <position position="27"/>
    </location>
    <ligand>
        <name>Zn(2+)</name>
        <dbReference type="ChEBI" id="CHEBI:29105"/>
        <label>2</label>
    </ligand>
</feature>
<feature type="binding site" evidence="1">
    <location>
        <position position="30"/>
    </location>
    <ligand>
        <name>Zn(2+)</name>
        <dbReference type="ChEBI" id="CHEBI:29105"/>
        <label>2</label>
    </ligand>
</feature>
<feature type="binding site" evidence="1">
    <location>
        <position position="33"/>
    </location>
    <ligand>
        <name>Zn(2+)</name>
        <dbReference type="ChEBI" id="CHEBI:29105"/>
        <label>1</label>
    </ligand>
</feature>
<feature type="binding site" evidence="1">
    <location>
        <position position="34"/>
    </location>
    <ligand>
        <name>Zn(2+)</name>
        <dbReference type="ChEBI" id="CHEBI:29105"/>
        <label>1</label>
    </ligand>
</feature>
<feature type="binding site" evidence="1">
    <location>
        <position position="37"/>
    </location>
    <ligand>
        <name>Zn(2+)</name>
        <dbReference type="ChEBI" id="CHEBI:29105"/>
        <label>1</label>
    </ligand>
</feature>
<feature type="site" description="Essential for Tat translocation through the endosomal membrane" evidence="1">
    <location>
        <position position="11"/>
    </location>
</feature>
<feature type="modified residue" description="N6-acetyllysine; by host PCAF" evidence="1">
    <location>
        <position position="28"/>
    </location>
</feature>
<feature type="modified residue" description="N6-acetyllysine; by host EP300 and GCN5L2" evidence="1">
    <location>
        <position position="50"/>
    </location>
</feature>
<feature type="modified residue" description="N6-acetyllysine; by host EP300 and GCN5L2" evidence="1">
    <location>
        <position position="51"/>
    </location>
</feature>
<feature type="modified residue" description="Asymmetric dimethylarginine; by host PRMT6" evidence="1">
    <location>
        <position position="52"/>
    </location>
</feature>
<feature type="modified residue" description="Asymmetric dimethylarginine; by host PRMT6" evidence="1">
    <location>
        <position position="53"/>
    </location>
</feature>
<feature type="splice variant" id="VSP_022414" description="In isoform Short.">
    <location>
        <begin position="73"/>
        <end position="87"/>
    </location>
</feature>
<feature type="turn" evidence="4">
    <location>
        <begin position="17"/>
        <end position="19"/>
    </location>
</feature>
<feature type="strand" evidence="4">
    <location>
        <begin position="25"/>
        <end position="27"/>
    </location>
</feature>
<feature type="strand" evidence="4">
    <location>
        <begin position="44"/>
        <end position="47"/>
    </location>
</feature>
<feature type="helix" evidence="4">
    <location>
        <begin position="62"/>
        <end position="65"/>
    </location>
</feature>
<feature type="strand" evidence="4">
    <location>
        <begin position="67"/>
        <end position="71"/>
    </location>
</feature>
<feature type="turn" evidence="4">
    <location>
        <begin position="75"/>
        <end position="78"/>
    </location>
</feature>
<feature type="strand" evidence="4">
    <location>
        <begin position="81"/>
        <end position="83"/>
    </location>
</feature>
<evidence type="ECO:0000255" key="1">
    <source>
        <dbReference type="HAMAP-Rule" id="MF_04079"/>
    </source>
</evidence>
<evidence type="ECO:0000256" key="2">
    <source>
        <dbReference type="SAM" id="MobiDB-lite"/>
    </source>
</evidence>
<evidence type="ECO:0000305" key="3"/>
<evidence type="ECO:0007829" key="4">
    <source>
        <dbReference type="PDB" id="1K5K"/>
    </source>
</evidence>
<gene>
    <name evidence="1" type="primary">tat</name>
</gene>